<accession>Q9LNJ9</accession>
<evidence type="ECO:0000255" key="1"/>
<evidence type="ECO:0000269" key="2">
    <source>
    </source>
</evidence>
<evidence type="ECO:0000305" key="3"/>
<feature type="chain" id="PRO_0000407405" description="Bifunctional fucokinase/GDP-fucose pyrophosphorylase">
    <location>
        <begin position="1"/>
        <end position="1055"/>
    </location>
</feature>
<feature type="region of interest" description="GDP-fucose pyrophosphorylase">
    <location>
        <begin position="34"/>
        <end position="565"/>
    </location>
</feature>
<feature type="region of interest" description="L-fucokinase">
    <location>
        <begin position="693"/>
        <end position="1055"/>
    </location>
</feature>
<feature type="binding site" evidence="1">
    <location>
        <begin position="826"/>
        <end position="836"/>
    </location>
    <ligand>
        <name>ATP</name>
        <dbReference type="ChEBI" id="CHEBI:30616"/>
    </ligand>
</feature>
<feature type="mutagenesis site" description="Loss of GDP-fucose pyrophosphorylase activity, but no effect on L-fucokinase activity. Total loss of both activities; when associated with A-830." evidence="2">
    <original>G</original>
    <variation>A</variation>
    <location>
        <position position="133"/>
    </location>
</feature>
<feature type="mutagenesis site" description="90% reduction of the L-fucokinase activity, but no effect on the GDP-fucose pyrophosphorylase activity. Total loss of both activities; when associated with A-133." evidence="2">
    <original>G</original>
    <variation>A</variation>
    <location>
        <position position="830"/>
    </location>
</feature>
<reference key="1">
    <citation type="journal article" date="2008" name="J. Biol. Chem.">
        <title>A bifunctional enzyme with L-fucokinase and GDP-L-fucose pyrophosphorylase activities salvages free L-fucose in Arabidopsis.</title>
        <authorList>
            <person name="Kotake T."/>
            <person name="Hojo S."/>
            <person name="Tajima N."/>
            <person name="Matsuoka K."/>
            <person name="Koyama T."/>
            <person name="Tsumuraya Y."/>
        </authorList>
    </citation>
    <scope>NUCLEOTIDE SEQUENCE [MRNA]</scope>
    <scope>FUNCTION</scope>
    <scope>CATALYTIC ACTIVITY</scope>
    <scope>MUTAGENESIS OF GLY-133 AND GLY-830</scope>
    <scope>COFACTOR</scope>
    <scope>BIOPHYSICOCHEMICAL PROPERTIES</scope>
    <scope>TISSUE SPECIFICITY</scope>
    <scope>DISRUPTION PHENOTYPE</scope>
</reference>
<reference key="2">
    <citation type="journal article" date="2000" name="Nature">
        <title>Sequence and analysis of chromosome 1 of the plant Arabidopsis thaliana.</title>
        <authorList>
            <person name="Theologis A."/>
            <person name="Ecker J.R."/>
            <person name="Palm C.J."/>
            <person name="Federspiel N.A."/>
            <person name="Kaul S."/>
            <person name="White O."/>
            <person name="Alonso J."/>
            <person name="Altafi H."/>
            <person name="Araujo R."/>
            <person name="Bowman C.L."/>
            <person name="Brooks S.Y."/>
            <person name="Buehler E."/>
            <person name="Chan A."/>
            <person name="Chao Q."/>
            <person name="Chen H."/>
            <person name="Cheuk R.F."/>
            <person name="Chin C.W."/>
            <person name="Chung M.K."/>
            <person name="Conn L."/>
            <person name="Conway A.B."/>
            <person name="Conway A.R."/>
            <person name="Creasy T.H."/>
            <person name="Dewar K."/>
            <person name="Dunn P."/>
            <person name="Etgu P."/>
            <person name="Feldblyum T.V."/>
            <person name="Feng J.-D."/>
            <person name="Fong B."/>
            <person name="Fujii C.Y."/>
            <person name="Gill J.E."/>
            <person name="Goldsmith A.D."/>
            <person name="Haas B."/>
            <person name="Hansen N.F."/>
            <person name="Hughes B."/>
            <person name="Huizar L."/>
            <person name="Hunter J.L."/>
            <person name="Jenkins J."/>
            <person name="Johnson-Hopson C."/>
            <person name="Khan S."/>
            <person name="Khaykin E."/>
            <person name="Kim C.J."/>
            <person name="Koo H.L."/>
            <person name="Kremenetskaia I."/>
            <person name="Kurtz D.B."/>
            <person name="Kwan A."/>
            <person name="Lam B."/>
            <person name="Langin-Hooper S."/>
            <person name="Lee A."/>
            <person name="Lee J.M."/>
            <person name="Lenz C.A."/>
            <person name="Li J.H."/>
            <person name="Li Y.-P."/>
            <person name="Lin X."/>
            <person name="Liu S.X."/>
            <person name="Liu Z.A."/>
            <person name="Luros J.S."/>
            <person name="Maiti R."/>
            <person name="Marziali A."/>
            <person name="Militscher J."/>
            <person name="Miranda M."/>
            <person name="Nguyen M."/>
            <person name="Nierman W.C."/>
            <person name="Osborne B.I."/>
            <person name="Pai G."/>
            <person name="Peterson J."/>
            <person name="Pham P.K."/>
            <person name="Rizzo M."/>
            <person name="Rooney T."/>
            <person name="Rowley D."/>
            <person name="Sakano H."/>
            <person name="Salzberg S.L."/>
            <person name="Schwartz J.R."/>
            <person name="Shinn P."/>
            <person name="Southwick A.M."/>
            <person name="Sun H."/>
            <person name="Tallon L.J."/>
            <person name="Tambunga G."/>
            <person name="Toriumi M.J."/>
            <person name="Town C.D."/>
            <person name="Utterback T."/>
            <person name="Van Aken S."/>
            <person name="Vaysberg M."/>
            <person name="Vysotskaia V.S."/>
            <person name="Walker M."/>
            <person name="Wu D."/>
            <person name="Yu G."/>
            <person name="Fraser C.M."/>
            <person name="Venter J.C."/>
            <person name="Davis R.W."/>
        </authorList>
    </citation>
    <scope>NUCLEOTIDE SEQUENCE [LARGE SCALE GENOMIC DNA]</scope>
    <source>
        <strain>cv. Columbia</strain>
    </source>
</reference>
<reference key="3">
    <citation type="journal article" date="2017" name="Plant J.">
        <title>Araport11: a complete reannotation of the Arabidopsis thaliana reference genome.</title>
        <authorList>
            <person name="Cheng C.Y."/>
            <person name="Krishnakumar V."/>
            <person name="Chan A.P."/>
            <person name="Thibaud-Nissen F."/>
            <person name="Schobel S."/>
            <person name="Town C.D."/>
        </authorList>
    </citation>
    <scope>GENOME REANNOTATION</scope>
    <source>
        <strain>cv. Columbia</strain>
    </source>
</reference>
<sequence>MSKQRKKADLATVLRKSWYHLRLSVRHPTRVPTWDAIVLTAASPEQAELYDWQLRRAKRMGRIASSTVTLAVPDPDGKRIGSGAATLNAIYALARHYEKLGFDLGPEMEVANGACKWVRFISAKHVLMLHAGGDSKRVPWANPMGKVFLPLPYLAADDPDGPVPLLFDHILAIASCARQAFQDQGGLFIMTGDVLPCFDAFKMTLPEDAASIVTVPITLDIASNHGVIVTSKSESLAESYTVSLVNDLLQKPTVEDLVKKDAILHDGRTLLDTGIISARGRAWSDLVALGCSCQPMILELIGSKKEMSLYEDLVAAWVPSRHDWLRTRPLGELLVNSLGRQKMYSYCTYDLQFLHFGTSSEVLDHLSGDASGIVGRRHLCSIPATTVSDIAASSVILSSEIAPGVSIGEDSLIYDSTVSGAVQIGSQSIVVGIHIPSEDLGTPESFRFMLPDRHCLWEVPLVGHKGRVIVYCGLHDNPKNSIHKDGTFCGKPLEKVLFDLGIEESDLWSSYVAQDRCLWNAKLFPILTYSEMLKLASWLMGLDDSRNKEKIKLWRSSQRVSLEELHGSINFPEMCNGSSNHQADLAGGIAKACMNYGMLGRNLSQLCHEILQKESLGLEICKNFLDQCPKFQEQNSKILPKSRAYQVEVDLLRACGDEAKAIELEHKVWGAVAEETASAVRYGFREHLLESSGKSHSENHISHPDRVFQPRRTKVELPVRVDFVGGWSDTPPWSLERAGYVLNMAITLEGSLPIGTIIETTNQMGISIQDDAGNELHIEDPISIKTPFEVNDPFRLVKSALLVTGIVQENFVDSTGLAIKTWANVPRGSGLGTSSILAAAVVKGLLQISNGDESNENIARLVLVLEQLMGTGGGWQDQIGGLYPGIKFTSSFPGIPMRLQVVPLLASPQLISELEQRLLVVFTGQVRLAHQVLHKVVTRYLQRDNLLISSIKRLTELAKSGREALMNCEVDEVGDIMSEAWRLHQELDPYCSNEFVDKLFEFSQPYSSGFKLVGAGGGGFSLILAKDAEKAKELRQRLEEHAEFDVKVYNWSICI</sequence>
<protein>
    <recommendedName>
        <fullName>Bifunctional fucokinase/GDP-fucose pyrophosphorylase</fullName>
        <shortName>AtFKGP</shortName>
    </recommendedName>
    <domain>
        <recommendedName>
            <fullName>Fucose-1-phosphate guanylyltransferase</fullName>
            <ecNumber evidence="2">2.7.7.30</ecNumber>
        </recommendedName>
        <alternativeName>
            <fullName>GDP-fucose pyrophosphorylase</fullName>
        </alternativeName>
    </domain>
    <domain>
        <recommendedName>
            <fullName>L-fucokinase</fullName>
            <ecNumber evidence="2">2.7.1.52</ecNumber>
        </recommendedName>
    </domain>
</protein>
<name>FKGP_ARATH</name>
<gene>
    <name type="primary">FKGP</name>
    <name type="ordered locus">At1g01220</name>
    <name type="ORF">F6F3.3</name>
</gene>
<proteinExistence type="evidence at protein level"/>
<comment type="function">
    <text evidence="2">Bifunctional enzyme involved in the salvage pathway which converts free L-fucose to GDP-L-fucose. Catalyzes two successive reactions, the ATP-dependent phosphorylation of L-fucose to L-fucose 1-phosphate, and its guanylylation to GDP-L-fucose. The sugar-1-kinase activity has a strict substrate specificity for L-fucose and ATP. The pyrophosphorylase activity has a strict substrate specificity for L-fucose 1-phosphate and GTP.</text>
</comment>
<comment type="catalytic activity">
    <reaction evidence="2">
        <text>L-fucose + ATP = beta-L-fucose 1-phosphate + ADP + H(+)</text>
        <dbReference type="Rhea" id="RHEA:13241"/>
        <dbReference type="ChEBI" id="CHEBI:2181"/>
        <dbReference type="ChEBI" id="CHEBI:15378"/>
        <dbReference type="ChEBI" id="CHEBI:30616"/>
        <dbReference type="ChEBI" id="CHEBI:57268"/>
        <dbReference type="ChEBI" id="CHEBI:456216"/>
        <dbReference type="EC" id="2.7.1.52"/>
    </reaction>
</comment>
<comment type="catalytic activity">
    <reaction evidence="2">
        <text>beta-L-fucose 1-phosphate + GTP + H(+) = GDP-beta-L-fucose + diphosphate</text>
        <dbReference type="Rhea" id="RHEA:13549"/>
        <dbReference type="ChEBI" id="CHEBI:15378"/>
        <dbReference type="ChEBI" id="CHEBI:33019"/>
        <dbReference type="ChEBI" id="CHEBI:37565"/>
        <dbReference type="ChEBI" id="CHEBI:57268"/>
        <dbReference type="ChEBI" id="CHEBI:57273"/>
        <dbReference type="EC" id="2.7.7.30"/>
    </reaction>
</comment>
<comment type="cofactor">
    <cofactor evidence="2">
        <name>Mn(2+)</name>
        <dbReference type="ChEBI" id="CHEBI:29035"/>
    </cofactor>
    <cofactor evidence="2">
        <name>Mg(2+)</name>
        <dbReference type="ChEBI" id="CHEBI:18420"/>
    </cofactor>
    <text evidence="2">The L-fucokinase activity absolutely requires divalent cations such as Mn(2+) and Mg(2+).</text>
</comment>
<comment type="cofactor">
    <cofactor evidence="2">
        <name>Mg(2+)</name>
        <dbReference type="ChEBI" id="CHEBI:18420"/>
    </cofactor>
    <text evidence="2">The GDP-fucose pyrophosphorylase activity also requires divalent cations, with a high preference for Mg(2+).</text>
</comment>
<comment type="biophysicochemical properties">
    <kinetics>
        <KM evidence="2">1 mM for L-fucose for the L-fucokinase activity</KM>
        <KM evidence="2">0.45 mM for ATP for the L-fucokinase activity</KM>
        <KM evidence="2">0.052 mM for L-fucose 1-phosphate for the GDP-fucose pyrophosphorylase activity in the forward reaction</KM>
        <KM evidence="2">0.17 mM for GTP for the GDP-fucose pyrophosphorylase activity in the forward reaction</KM>
        <KM evidence="2">0.4 mM for GDP-L-fucose for the GDP-fucose pyrophosphorylase activity in the reverse reaction</KM>
        <KM evidence="2">0.18 mM for diphosphate for the GDP-fucose pyrophosphorylase activity in the reverse reaction</KM>
    </kinetics>
    <phDependence>
        <text evidence="2">Optimum pH is 10.5 for the L-fucokinase activity and 6.5-8 for the GDP-fucose pyrophosphorylase activity.</text>
    </phDependence>
    <temperatureDependence>
        <text evidence="2">Optimum temperature is 40 degrees Celsius for the L-fucokinase activity and 30-45 degrees Celsius for the GDP-fucose pyrophosphorylase activity.</text>
    </temperatureDependence>
</comment>
<comment type="tissue specificity">
    <text evidence="2">Ubiquitous. Highest expression in flower buds.</text>
</comment>
<comment type="disruption phenotype">
    <text evidence="2">No visible phenotype and no alteration of the sugar composition of cell wall polysaccharides, but accumulation of free L-fucose.</text>
</comment>
<comment type="similarity">
    <text evidence="3">Belongs to the GHMP kinase family.</text>
</comment>
<comment type="sequence caution" evidence="3">
    <conflict type="erroneous gene model prediction">
        <sequence resource="EMBL-CDS" id="AAF97333"/>
    </conflict>
</comment>
<organism>
    <name type="scientific">Arabidopsis thaliana</name>
    <name type="common">Mouse-ear cress</name>
    <dbReference type="NCBI Taxonomy" id="3702"/>
    <lineage>
        <taxon>Eukaryota</taxon>
        <taxon>Viridiplantae</taxon>
        <taxon>Streptophyta</taxon>
        <taxon>Embryophyta</taxon>
        <taxon>Tracheophyta</taxon>
        <taxon>Spermatophyta</taxon>
        <taxon>Magnoliopsida</taxon>
        <taxon>eudicotyledons</taxon>
        <taxon>Gunneridae</taxon>
        <taxon>Pentapetalae</taxon>
        <taxon>rosids</taxon>
        <taxon>malvids</taxon>
        <taxon>Brassicales</taxon>
        <taxon>Brassicaceae</taxon>
        <taxon>Camelineae</taxon>
        <taxon>Arabidopsis</taxon>
    </lineage>
</organism>
<dbReference type="EC" id="2.7.7.30" evidence="2"/>
<dbReference type="EC" id="2.7.1.52" evidence="2"/>
<dbReference type="EMBL" id="AC023628">
    <property type="protein sequence ID" value="AAF97333.1"/>
    <property type="status" value="ALT_SEQ"/>
    <property type="molecule type" value="Genomic_DNA"/>
</dbReference>
<dbReference type="EMBL" id="CP002684">
    <property type="protein sequence ID" value="AEE27255.1"/>
    <property type="molecule type" value="Genomic_DNA"/>
</dbReference>
<dbReference type="EMBL" id="CP002684">
    <property type="protein sequence ID" value="ANM58557.1"/>
    <property type="molecule type" value="Genomic_DNA"/>
</dbReference>
<dbReference type="PIR" id="D86142">
    <property type="entry name" value="D86142"/>
</dbReference>
<dbReference type="RefSeq" id="NP_001320982.1">
    <property type="nucleotide sequence ID" value="NM_001331261.1"/>
</dbReference>
<dbReference type="RefSeq" id="NP_563620.1">
    <property type="nucleotide sequence ID" value="NM_100004.4"/>
</dbReference>
<dbReference type="FunCoup" id="Q9LNJ9">
    <property type="interactions" value="2458"/>
</dbReference>
<dbReference type="STRING" id="3702.Q9LNJ9"/>
<dbReference type="iPTMnet" id="Q9LNJ9"/>
<dbReference type="PaxDb" id="3702-AT1G01220.1"/>
<dbReference type="ProteomicsDB" id="228929"/>
<dbReference type="EnsemblPlants" id="AT1G01220.1">
    <property type="protein sequence ID" value="AT1G01220.1"/>
    <property type="gene ID" value="AT1G01220"/>
</dbReference>
<dbReference type="EnsemblPlants" id="AT1G01220.7">
    <property type="protein sequence ID" value="AT1G01220.7"/>
    <property type="gene ID" value="AT1G01220"/>
</dbReference>
<dbReference type="GeneID" id="839420"/>
<dbReference type="Gramene" id="AT1G01220.1">
    <property type="protein sequence ID" value="AT1G01220.1"/>
    <property type="gene ID" value="AT1G01220"/>
</dbReference>
<dbReference type="Gramene" id="AT1G01220.7">
    <property type="protein sequence ID" value="AT1G01220.7"/>
    <property type="gene ID" value="AT1G01220"/>
</dbReference>
<dbReference type="KEGG" id="ath:AT1G01220"/>
<dbReference type="Araport" id="AT1G01220"/>
<dbReference type="TAIR" id="AT1G01220">
    <property type="gene designation" value="FKGP"/>
</dbReference>
<dbReference type="eggNOG" id="KOG4644">
    <property type="taxonomic scope" value="Eukaryota"/>
</dbReference>
<dbReference type="HOGENOM" id="CLU_006983_1_1_1"/>
<dbReference type="InParanoid" id="Q9LNJ9"/>
<dbReference type="OMA" id="QRWREAW"/>
<dbReference type="OrthoDB" id="271303at2759"/>
<dbReference type="PRO" id="PR:Q9LNJ9"/>
<dbReference type="Proteomes" id="UP000006548">
    <property type="component" value="Chromosome 1"/>
</dbReference>
<dbReference type="ExpressionAtlas" id="Q9LNJ9">
    <property type="expression patterns" value="baseline and differential"/>
</dbReference>
<dbReference type="GO" id="GO:0005524">
    <property type="term" value="F:ATP binding"/>
    <property type="evidence" value="ECO:0007669"/>
    <property type="project" value="UniProtKB-KW"/>
</dbReference>
<dbReference type="GO" id="GO:0050201">
    <property type="term" value="F:fucokinase activity"/>
    <property type="evidence" value="ECO:0000314"/>
    <property type="project" value="TAIR"/>
</dbReference>
<dbReference type="GO" id="GO:0047341">
    <property type="term" value="F:fucose-1-phosphate guanylyltransferase activity"/>
    <property type="evidence" value="ECO:0000314"/>
    <property type="project" value="TAIR"/>
</dbReference>
<dbReference type="GO" id="GO:0046872">
    <property type="term" value="F:metal ion binding"/>
    <property type="evidence" value="ECO:0007669"/>
    <property type="project" value="UniProtKB-KW"/>
</dbReference>
<dbReference type="GO" id="GO:0042352">
    <property type="term" value="P:GDP-L-fucose salvage"/>
    <property type="evidence" value="ECO:0000314"/>
    <property type="project" value="TAIR"/>
</dbReference>
<dbReference type="FunFam" id="3.30.230.120:FF:000002">
    <property type="entry name" value="Bifunctional fucokinase/fucose pyrophosphorylase"/>
    <property type="match status" value="1"/>
</dbReference>
<dbReference type="Gene3D" id="3.30.230.120">
    <property type="match status" value="1"/>
</dbReference>
<dbReference type="InterPro" id="IPR012887">
    <property type="entry name" value="GDP_fucose_pyrophosphorylase"/>
</dbReference>
<dbReference type="InterPro" id="IPR052203">
    <property type="entry name" value="GHMP_Kinase-Related"/>
</dbReference>
<dbReference type="InterPro" id="IPR013750">
    <property type="entry name" value="GHMP_kinase_C_dom"/>
</dbReference>
<dbReference type="InterPro" id="IPR036554">
    <property type="entry name" value="GHMP_kinase_C_sf"/>
</dbReference>
<dbReference type="InterPro" id="IPR006204">
    <property type="entry name" value="GHMP_kinase_N_dom"/>
</dbReference>
<dbReference type="InterPro" id="IPR020568">
    <property type="entry name" value="Ribosomal_Su5_D2-typ_SF"/>
</dbReference>
<dbReference type="PANTHER" id="PTHR32463">
    <property type="entry name" value="L-FUCOSE KINASE"/>
    <property type="match status" value="1"/>
</dbReference>
<dbReference type="PANTHER" id="PTHR32463:SF0">
    <property type="entry name" value="L-FUCOSE KINASE"/>
    <property type="match status" value="1"/>
</dbReference>
<dbReference type="Pfam" id="PF07959">
    <property type="entry name" value="Fucose_pyrophosphorylase"/>
    <property type="match status" value="1"/>
</dbReference>
<dbReference type="Pfam" id="PF08544">
    <property type="entry name" value="GHMP_kinases_C"/>
    <property type="match status" value="1"/>
</dbReference>
<dbReference type="Pfam" id="PF00288">
    <property type="entry name" value="GHMP_kinases_N"/>
    <property type="match status" value="1"/>
</dbReference>
<dbReference type="PRINTS" id="PR00959">
    <property type="entry name" value="MEVGALKINASE"/>
</dbReference>
<dbReference type="SUPFAM" id="SSF55060">
    <property type="entry name" value="GHMP Kinase, C-terminal domain"/>
    <property type="match status" value="1"/>
</dbReference>
<dbReference type="SUPFAM" id="SSF54211">
    <property type="entry name" value="Ribosomal protein S5 domain 2-like"/>
    <property type="match status" value="1"/>
</dbReference>
<keyword id="KW-0067">ATP-binding</keyword>
<keyword id="KW-0119">Carbohydrate metabolism</keyword>
<keyword id="KW-0418">Kinase</keyword>
<keyword id="KW-0460">Magnesium</keyword>
<keyword id="KW-0464">Manganese</keyword>
<keyword id="KW-0479">Metal-binding</keyword>
<keyword id="KW-0511">Multifunctional enzyme</keyword>
<keyword id="KW-0547">Nucleotide-binding</keyword>
<keyword id="KW-1185">Reference proteome</keyword>
<keyword id="KW-0808">Transferase</keyword>